<feature type="chain" id="PRO_0000207145" description="Stefin-C">
    <location>
        <begin position="1"/>
        <end position="101"/>
    </location>
</feature>
<feature type="short sequence motif" description="Secondary area of contact">
    <location>
        <begin position="49"/>
        <end position="53"/>
    </location>
</feature>
<feature type="site" description="Reactive site" evidence="1">
    <location>
        <position position="7"/>
    </location>
</feature>
<feature type="modified residue" description="N-acetylmethionine" evidence="2">
    <location>
        <position position="1"/>
    </location>
</feature>
<dbReference type="PIR" id="A46083">
    <property type="entry name" value="A46083"/>
</dbReference>
<dbReference type="SMR" id="P35478"/>
<dbReference type="FunCoup" id="P35478">
    <property type="interactions" value="710"/>
</dbReference>
<dbReference type="STRING" id="9913.ENSBTAP00000024208"/>
<dbReference type="MEROPS" id="I25.003"/>
<dbReference type="iPTMnet" id="P35478"/>
<dbReference type="PaxDb" id="9913-ENSBTAP00000024208"/>
<dbReference type="PeptideAtlas" id="P35478"/>
<dbReference type="eggNOG" id="ENOG502SF2X">
    <property type="taxonomic scope" value="Eukaryota"/>
</dbReference>
<dbReference type="InParanoid" id="P35478"/>
<dbReference type="Proteomes" id="UP000009136">
    <property type="component" value="Unplaced"/>
</dbReference>
<dbReference type="GO" id="GO:0005829">
    <property type="term" value="C:cytosol"/>
    <property type="evidence" value="ECO:0000318"/>
    <property type="project" value="GO_Central"/>
</dbReference>
<dbReference type="GO" id="GO:0004869">
    <property type="term" value="F:cysteine-type endopeptidase inhibitor activity"/>
    <property type="evidence" value="ECO:0000318"/>
    <property type="project" value="GO_Central"/>
</dbReference>
<dbReference type="CDD" id="cd00042">
    <property type="entry name" value="CY"/>
    <property type="match status" value="1"/>
</dbReference>
<dbReference type="FunFam" id="3.10.450.10:FF:000001">
    <property type="entry name" value="Cystatin-A"/>
    <property type="match status" value="1"/>
</dbReference>
<dbReference type="Gene3D" id="3.10.450.10">
    <property type="match status" value="1"/>
</dbReference>
<dbReference type="InterPro" id="IPR000010">
    <property type="entry name" value="Cystatin_dom"/>
</dbReference>
<dbReference type="InterPro" id="IPR046350">
    <property type="entry name" value="Cystatin_sf"/>
</dbReference>
<dbReference type="InterPro" id="IPR018073">
    <property type="entry name" value="Prot_inh_cystat_CS"/>
</dbReference>
<dbReference type="InterPro" id="IPR001713">
    <property type="entry name" value="Prot_inh_stefin"/>
</dbReference>
<dbReference type="PANTHER" id="PTHR11414">
    <property type="entry name" value="CYSTATIN FAMILY MEMBER"/>
    <property type="match status" value="1"/>
</dbReference>
<dbReference type="PANTHER" id="PTHR11414:SF22">
    <property type="entry name" value="CYSTATIN-B"/>
    <property type="match status" value="1"/>
</dbReference>
<dbReference type="Pfam" id="PF00031">
    <property type="entry name" value="Cystatin"/>
    <property type="match status" value="1"/>
</dbReference>
<dbReference type="PRINTS" id="PR00295">
    <property type="entry name" value="STEFINA"/>
</dbReference>
<dbReference type="SMART" id="SM00043">
    <property type="entry name" value="CY"/>
    <property type="match status" value="1"/>
</dbReference>
<dbReference type="SUPFAM" id="SSF54403">
    <property type="entry name" value="Cystatin/monellin"/>
    <property type="match status" value="1"/>
</dbReference>
<dbReference type="PROSITE" id="PS00287">
    <property type="entry name" value="CYSTATIN"/>
    <property type="match status" value="1"/>
</dbReference>
<organism>
    <name type="scientific">Bos taurus</name>
    <name type="common">Bovine</name>
    <dbReference type="NCBI Taxonomy" id="9913"/>
    <lineage>
        <taxon>Eukaryota</taxon>
        <taxon>Metazoa</taxon>
        <taxon>Chordata</taxon>
        <taxon>Craniata</taxon>
        <taxon>Vertebrata</taxon>
        <taxon>Euteleostomi</taxon>
        <taxon>Mammalia</taxon>
        <taxon>Eutheria</taxon>
        <taxon>Laurasiatheria</taxon>
        <taxon>Artiodactyla</taxon>
        <taxon>Ruminantia</taxon>
        <taxon>Pecora</taxon>
        <taxon>Bovidae</taxon>
        <taxon>Bovinae</taxon>
        <taxon>Bos</taxon>
    </lineage>
</organism>
<accession>P35478</accession>
<protein>
    <recommendedName>
        <fullName>Stefin-C</fullName>
    </recommendedName>
</protein>
<proteinExistence type="evidence at protein level"/>
<evidence type="ECO:0000250" key="1"/>
<evidence type="ECO:0000269" key="2">
    <source>
    </source>
</evidence>
<evidence type="ECO:0000305" key="3"/>
<reference key="1">
    <citation type="journal article" date="1993" name="J. Biol. Chem.">
        <title>Bovine stefin C, a new member of the stefin family.</title>
        <authorList>
            <person name="Turk B."/>
            <person name="Krizaj I."/>
            <person name="Kralj B."/>
            <person name="Dolenc I."/>
            <person name="Popovic T."/>
            <person name="Bieth J.G."/>
            <person name="Turk V."/>
        </authorList>
    </citation>
    <scope>PROTEIN SEQUENCE</scope>
    <scope>ACETYLATION AT MET-1</scope>
    <source>
        <tissue>Thymus</tissue>
    </source>
</reference>
<comment type="function">
    <text>Strong inhibitor of papain and cathepsin L but poor inhibitor of cathepsin B.</text>
</comment>
<comment type="subcellular location">
    <subcellularLocation>
        <location>Cytoplasm</location>
    </subcellularLocation>
</comment>
<comment type="similarity">
    <text evidence="3">Belongs to the cystatin family.</text>
</comment>
<keyword id="KW-0007">Acetylation</keyword>
<keyword id="KW-0963">Cytoplasm</keyword>
<keyword id="KW-0903">Direct protein sequencing</keyword>
<keyword id="KW-0646">Protease inhibitor</keyword>
<keyword id="KW-1185">Reference proteome</keyword>
<keyword id="KW-0789">Thiol protease inhibitor</keyword>
<sequence length="101" mass="11603">MWGPNLGGFSDTQDATAEIQAIADQVKSQLEEKENKKFPVFKAVKFRSQVVAGMNYLIKVQVDEDDFVHIRVFESLPHENKPVALTSYQTNKVRHDELTYF</sequence>
<name>CYTX_BOVIN</name>